<organism>
    <name type="scientific">Methylobacillus flagellatus (strain ATCC 51484 / DSM 6875 / VKM B-1610 / KT)</name>
    <dbReference type="NCBI Taxonomy" id="265072"/>
    <lineage>
        <taxon>Bacteria</taxon>
        <taxon>Pseudomonadati</taxon>
        <taxon>Pseudomonadota</taxon>
        <taxon>Betaproteobacteria</taxon>
        <taxon>Nitrosomonadales</taxon>
        <taxon>Methylophilaceae</taxon>
        <taxon>Methylobacillus</taxon>
    </lineage>
</organism>
<reference key="1">
    <citation type="submission" date="2006-03" db="EMBL/GenBank/DDBJ databases">
        <title>Complete sequence of Methylobacillus flagellatus KT.</title>
        <authorList>
            <consortium name="US DOE Joint Genome Institute"/>
            <person name="Copeland A."/>
            <person name="Lucas S."/>
            <person name="Lapidus A."/>
            <person name="Barry K."/>
            <person name="Detter J.C."/>
            <person name="Glavina del Rio T."/>
            <person name="Hammon N."/>
            <person name="Israni S."/>
            <person name="Dalin E."/>
            <person name="Tice H."/>
            <person name="Pitluck S."/>
            <person name="Brettin T."/>
            <person name="Bruce D."/>
            <person name="Han C."/>
            <person name="Tapia R."/>
            <person name="Saunders E."/>
            <person name="Gilna P."/>
            <person name="Schmutz J."/>
            <person name="Larimer F."/>
            <person name="Land M."/>
            <person name="Kyrpides N."/>
            <person name="Anderson I."/>
            <person name="Richardson P."/>
        </authorList>
    </citation>
    <scope>NUCLEOTIDE SEQUENCE [LARGE SCALE GENOMIC DNA]</scope>
    <source>
        <strain>ATCC 51484 / DSM 6875 / VKM B-1610 / KT</strain>
    </source>
</reference>
<gene>
    <name evidence="1" type="primary">rplO</name>
    <name type="ordered locus">Mfla_0298</name>
</gene>
<accession>Q1H4L8</accession>
<sequence>MKLNTIKPAEGAKHARRRVGRGIGSGLGKTGGRGHKGQKSRAGGFHKVGFEGGQMPLQRRLPKRGFNSLTKADTANVRTADLVRVEADVIDILALKQANVIPSGARAVKVYLSGDVTRAVTVQGLALSKGARAAVEAAGGKIVE</sequence>
<comment type="function">
    <text evidence="1">Binds to the 23S rRNA.</text>
</comment>
<comment type="subunit">
    <text evidence="1">Part of the 50S ribosomal subunit.</text>
</comment>
<comment type="similarity">
    <text evidence="1">Belongs to the universal ribosomal protein uL15 family.</text>
</comment>
<protein>
    <recommendedName>
        <fullName evidence="1">Large ribosomal subunit protein uL15</fullName>
    </recommendedName>
    <alternativeName>
        <fullName evidence="3">50S ribosomal protein L15</fullName>
    </alternativeName>
</protein>
<keyword id="KW-1185">Reference proteome</keyword>
<keyword id="KW-0687">Ribonucleoprotein</keyword>
<keyword id="KW-0689">Ribosomal protein</keyword>
<keyword id="KW-0694">RNA-binding</keyword>
<keyword id="KW-0699">rRNA-binding</keyword>
<dbReference type="EMBL" id="CP000284">
    <property type="protein sequence ID" value="ABE48569.1"/>
    <property type="molecule type" value="Genomic_DNA"/>
</dbReference>
<dbReference type="RefSeq" id="WP_011478666.1">
    <property type="nucleotide sequence ID" value="NC_007947.1"/>
</dbReference>
<dbReference type="SMR" id="Q1H4L8"/>
<dbReference type="STRING" id="265072.Mfla_0298"/>
<dbReference type="KEGG" id="mfa:Mfla_0298"/>
<dbReference type="eggNOG" id="COG0200">
    <property type="taxonomic scope" value="Bacteria"/>
</dbReference>
<dbReference type="HOGENOM" id="CLU_055188_4_2_4"/>
<dbReference type="OrthoDB" id="9810293at2"/>
<dbReference type="Proteomes" id="UP000002440">
    <property type="component" value="Chromosome"/>
</dbReference>
<dbReference type="GO" id="GO:0022625">
    <property type="term" value="C:cytosolic large ribosomal subunit"/>
    <property type="evidence" value="ECO:0007669"/>
    <property type="project" value="TreeGrafter"/>
</dbReference>
<dbReference type="GO" id="GO:0019843">
    <property type="term" value="F:rRNA binding"/>
    <property type="evidence" value="ECO:0007669"/>
    <property type="project" value="UniProtKB-UniRule"/>
</dbReference>
<dbReference type="GO" id="GO:0003735">
    <property type="term" value="F:structural constituent of ribosome"/>
    <property type="evidence" value="ECO:0007669"/>
    <property type="project" value="InterPro"/>
</dbReference>
<dbReference type="GO" id="GO:0006412">
    <property type="term" value="P:translation"/>
    <property type="evidence" value="ECO:0007669"/>
    <property type="project" value="UniProtKB-UniRule"/>
</dbReference>
<dbReference type="Gene3D" id="3.100.10.10">
    <property type="match status" value="1"/>
</dbReference>
<dbReference type="HAMAP" id="MF_01341">
    <property type="entry name" value="Ribosomal_uL15"/>
    <property type="match status" value="1"/>
</dbReference>
<dbReference type="InterPro" id="IPR030878">
    <property type="entry name" value="Ribosomal_uL15"/>
</dbReference>
<dbReference type="InterPro" id="IPR021131">
    <property type="entry name" value="Ribosomal_uL15/eL18"/>
</dbReference>
<dbReference type="InterPro" id="IPR036227">
    <property type="entry name" value="Ribosomal_uL15/eL18_sf"/>
</dbReference>
<dbReference type="InterPro" id="IPR005749">
    <property type="entry name" value="Ribosomal_uL15_bac-type"/>
</dbReference>
<dbReference type="NCBIfam" id="TIGR01071">
    <property type="entry name" value="rplO_bact"/>
    <property type="match status" value="1"/>
</dbReference>
<dbReference type="PANTHER" id="PTHR12934">
    <property type="entry name" value="50S RIBOSOMAL PROTEIN L15"/>
    <property type="match status" value="1"/>
</dbReference>
<dbReference type="PANTHER" id="PTHR12934:SF11">
    <property type="entry name" value="LARGE RIBOSOMAL SUBUNIT PROTEIN UL15M"/>
    <property type="match status" value="1"/>
</dbReference>
<dbReference type="Pfam" id="PF00828">
    <property type="entry name" value="Ribosomal_L27A"/>
    <property type="match status" value="1"/>
</dbReference>
<dbReference type="SUPFAM" id="SSF52080">
    <property type="entry name" value="Ribosomal proteins L15p and L18e"/>
    <property type="match status" value="1"/>
</dbReference>
<feature type="chain" id="PRO_0000251528" description="Large ribosomal subunit protein uL15">
    <location>
        <begin position="1"/>
        <end position="144"/>
    </location>
</feature>
<feature type="region of interest" description="Disordered" evidence="2">
    <location>
        <begin position="1"/>
        <end position="54"/>
    </location>
</feature>
<feature type="compositionally biased region" description="Gly residues" evidence="2">
    <location>
        <begin position="21"/>
        <end position="31"/>
    </location>
</feature>
<name>RL15_METFK</name>
<evidence type="ECO:0000255" key="1">
    <source>
        <dbReference type="HAMAP-Rule" id="MF_01341"/>
    </source>
</evidence>
<evidence type="ECO:0000256" key="2">
    <source>
        <dbReference type="SAM" id="MobiDB-lite"/>
    </source>
</evidence>
<evidence type="ECO:0000305" key="3"/>
<proteinExistence type="inferred from homology"/>